<protein>
    <recommendedName>
        <fullName evidence="1">Tetraacyldisaccharide 4'-kinase</fullName>
        <ecNumber evidence="1">2.7.1.130</ecNumber>
    </recommendedName>
    <alternativeName>
        <fullName evidence="1">Lipid A 4'-kinase</fullName>
    </alternativeName>
</protein>
<organism>
    <name type="scientific">Allorhizobium ampelinum (strain ATCC BAA-846 / DSM 112012 / S4)</name>
    <name type="common">Agrobacterium vitis (strain S4)</name>
    <dbReference type="NCBI Taxonomy" id="311402"/>
    <lineage>
        <taxon>Bacteria</taxon>
        <taxon>Pseudomonadati</taxon>
        <taxon>Pseudomonadota</taxon>
        <taxon>Alphaproteobacteria</taxon>
        <taxon>Hyphomicrobiales</taxon>
        <taxon>Rhizobiaceae</taxon>
        <taxon>Rhizobium/Agrobacterium group</taxon>
        <taxon>Allorhizobium</taxon>
        <taxon>Allorhizobium ampelinum</taxon>
    </lineage>
</organism>
<keyword id="KW-0067">ATP-binding</keyword>
<keyword id="KW-0418">Kinase</keyword>
<keyword id="KW-0441">Lipid A biosynthesis</keyword>
<keyword id="KW-0444">Lipid biosynthesis</keyword>
<keyword id="KW-0443">Lipid metabolism</keyword>
<keyword id="KW-0547">Nucleotide-binding</keyword>
<keyword id="KW-1185">Reference proteome</keyword>
<keyword id="KW-0808">Transferase</keyword>
<comment type="function">
    <text evidence="1">Transfers the gamma-phosphate of ATP to the 4'-position of a tetraacyldisaccharide 1-phosphate intermediate (termed DS-1-P) to form tetraacyldisaccharide 1,4'-bis-phosphate (lipid IVA).</text>
</comment>
<comment type="catalytic activity">
    <reaction evidence="1">
        <text>a lipid A disaccharide + ATP = a lipid IVA + ADP + H(+)</text>
        <dbReference type="Rhea" id="RHEA:67840"/>
        <dbReference type="ChEBI" id="CHEBI:15378"/>
        <dbReference type="ChEBI" id="CHEBI:30616"/>
        <dbReference type="ChEBI" id="CHEBI:176343"/>
        <dbReference type="ChEBI" id="CHEBI:176425"/>
        <dbReference type="ChEBI" id="CHEBI:456216"/>
        <dbReference type="EC" id="2.7.1.130"/>
    </reaction>
</comment>
<comment type="pathway">
    <text evidence="1">Glycolipid biosynthesis; lipid IV(A) biosynthesis; lipid IV(A) from (3R)-3-hydroxytetradecanoyl-[acyl-carrier-protein] and UDP-N-acetyl-alpha-D-glucosamine: step 6/6.</text>
</comment>
<comment type="similarity">
    <text evidence="1">Belongs to the LpxK family.</text>
</comment>
<accession>B9JSD8</accession>
<proteinExistence type="inferred from homology"/>
<sequence length="345" mass="37039">MKLHAPSFWWQKASFPALALWPLSFLYGRIAARRMRGSSAYAPAVPVICIGNVTLGGAGKTPTALALAKAALAMGLKPGFLSRGYGGTVRRPTLVDPGHHTAKDVGDEPLLLASVAPTVVASRRRDGARELERQGIDLIIMDDGFQSAQIRIDCAVVVTDSYKGDGNGFVFPAGPLRAPLAIQFQKLDMLLVVGKGDAAIPMVRRGARMGKPVLTAQLHPLPGPNLRGQRVLAYAGIADPEKFYRTLRELGADIVVARGFGDHQPLSAAAIAELIEEAEAKNLSLVTTAKDQARLRGSRRGGAGQDRAQELLAKSTVIEIEMIFDDPAVPARVIDQAQDRFRRSR</sequence>
<name>LPXK_ALLAM</name>
<reference key="1">
    <citation type="journal article" date="2009" name="J. Bacteriol.">
        <title>Genome sequences of three Agrobacterium biovars help elucidate the evolution of multichromosome genomes in bacteria.</title>
        <authorList>
            <person name="Slater S.C."/>
            <person name="Goldman B.S."/>
            <person name="Goodner B."/>
            <person name="Setubal J.C."/>
            <person name="Farrand S.K."/>
            <person name="Nester E.W."/>
            <person name="Burr T.J."/>
            <person name="Banta L."/>
            <person name="Dickerman A.W."/>
            <person name="Paulsen I."/>
            <person name="Otten L."/>
            <person name="Suen G."/>
            <person name="Welch R."/>
            <person name="Almeida N.F."/>
            <person name="Arnold F."/>
            <person name="Burton O.T."/>
            <person name="Du Z."/>
            <person name="Ewing A."/>
            <person name="Godsy E."/>
            <person name="Heisel S."/>
            <person name="Houmiel K.L."/>
            <person name="Jhaveri J."/>
            <person name="Lu J."/>
            <person name="Miller N.M."/>
            <person name="Norton S."/>
            <person name="Chen Q."/>
            <person name="Phoolcharoen W."/>
            <person name="Ohlin V."/>
            <person name="Ondrusek D."/>
            <person name="Pride N."/>
            <person name="Stricklin S.L."/>
            <person name="Sun J."/>
            <person name="Wheeler C."/>
            <person name="Wilson L."/>
            <person name="Zhu H."/>
            <person name="Wood D.W."/>
        </authorList>
    </citation>
    <scope>NUCLEOTIDE SEQUENCE [LARGE SCALE GENOMIC DNA]</scope>
    <source>
        <strain>ATCC BAA-846 / DSM 112012 / S4</strain>
    </source>
</reference>
<dbReference type="EC" id="2.7.1.130" evidence="1"/>
<dbReference type="EMBL" id="CP000633">
    <property type="protein sequence ID" value="ACM35631.1"/>
    <property type="molecule type" value="Genomic_DNA"/>
</dbReference>
<dbReference type="RefSeq" id="WP_015915056.1">
    <property type="nucleotide sequence ID" value="NC_011989.1"/>
</dbReference>
<dbReference type="SMR" id="B9JSD8"/>
<dbReference type="STRING" id="311402.Avi_0897"/>
<dbReference type="KEGG" id="avi:Avi_0897"/>
<dbReference type="eggNOG" id="COG1663">
    <property type="taxonomic scope" value="Bacteria"/>
</dbReference>
<dbReference type="HOGENOM" id="CLU_038816_0_0_5"/>
<dbReference type="UniPathway" id="UPA00359">
    <property type="reaction ID" value="UER00482"/>
</dbReference>
<dbReference type="Proteomes" id="UP000001596">
    <property type="component" value="Chromosome 1"/>
</dbReference>
<dbReference type="GO" id="GO:0005886">
    <property type="term" value="C:plasma membrane"/>
    <property type="evidence" value="ECO:0007669"/>
    <property type="project" value="TreeGrafter"/>
</dbReference>
<dbReference type="GO" id="GO:0005524">
    <property type="term" value="F:ATP binding"/>
    <property type="evidence" value="ECO:0007669"/>
    <property type="project" value="UniProtKB-UniRule"/>
</dbReference>
<dbReference type="GO" id="GO:0009029">
    <property type="term" value="F:tetraacyldisaccharide 4'-kinase activity"/>
    <property type="evidence" value="ECO:0007669"/>
    <property type="project" value="UniProtKB-UniRule"/>
</dbReference>
<dbReference type="GO" id="GO:0009245">
    <property type="term" value="P:lipid A biosynthetic process"/>
    <property type="evidence" value="ECO:0007669"/>
    <property type="project" value="UniProtKB-UniRule"/>
</dbReference>
<dbReference type="GO" id="GO:0009244">
    <property type="term" value="P:lipopolysaccharide core region biosynthetic process"/>
    <property type="evidence" value="ECO:0007669"/>
    <property type="project" value="TreeGrafter"/>
</dbReference>
<dbReference type="HAMAP" id="MF_00409">
    <property type="entry name" value="LpxK"/>
    <property type="match status" value="1"/>
</dbReference>
<dbReference type="InterPro" id="IPR003758">
    <property type="entry name" value="LpxK"/>
</dbReference>
<dbReference type="InterPro" id="IPR027417">
    <property type="entry name" value="P-loop_NTPase"/>
</dbReference>
<dbReference type="NCBIfam" id="TIGR00682">
    <property type="entry name" value="lpxK"/>
    <property type="match status" value="1"/>
</dbReference>
<dbReference type="PANTHER" id="PTHR42724">
    <property type="entry name" value="TETRAACYLDISACCHARIDE 4'-KINASE"/>
    <property type="match status" value="1"/>
</dbReference>
<dbReference type="PANTHER" id="PTHR42724:SF1">
    <property type="entry name" value="TETRAACYLDISACCHARIDE 4'-KINASE, MITOCHONDRIAL-RELATED"/>
    <property type="match status" value="1"/>
</dbReference>
<dbReference type="Pfam" id="PF02606">
    <property type="entry name" value="LpxK"/>
    <property type="match status" value="1"/>
</dbReference>
<dbReference type="SUPFAM" id="SSF52540">
    <property type="entry name" value="P-loop containing nucleoside triphosphate hydrolases"/>
    <property type="match status" value="1"/>
</dbReference>
<feature type="chain" id="PRO_1000134733" description="Tetraacyldisaccharide 4'-kinase">
    <location>
        <begin position="1"/>
        <end position="345"/>
    </location>
</feature>
<feature type="binding site" evidence="1">
    <location>
        <begin position="54"/>
        <end position="61"/>
    </location>
    <ligand>
        <name>ATP</name>
        <dbReference type="ChEBI" id="CHEBI:30616"/>
    </ligand>
</feature>
<gene>
    <name evidence="1" type="primary">lpxK</name>
    <name type="ordered locus">Avi_0897</name>
</gene>
<evidence type="ECO:0000255" key="1">
    <source>
        <dbReference type="HAMAP-Rule" id="MF_00409"/>
    </source>
</evidence>